<reference key="1">
    <citation type="journal article" date="1992" name="Cell Growth Differ.">
        <title>Identification and characterization of the regulated pattern of expression of a novel mouse gene, meg1, during the meiotic cell cycle.</title>
        <authorList>
            <person name="Don J."/>
            <person name="Wolgemuth D.J."/>
        </authorList>
    </citation>
    <scope>NUCLEOTIDE SEQUENCE [MRNA]</scope>
    <scope>FUNCTION</scope>
    <scope>DEVELOPMENTAL STAGE</scope>
    <scope>TISSUE SPECIFICITY</scope>
    <source>
        <strain>Swiss Webster</strain>
        <tissue>Testis</tissue>
    </source>
</reference>
<reference key="2">
    <citation type="journal article" date="2004" name="Genome Res.">
        <title>The status, quality, and expansion of the NIH full-length cDNA project: the Mammalian Gene Collection (MGC).</title>
        <authorList>
            <consortium name="The MGC Project Team"/>
        </authorList>
    </citation>
    <scope>NUCLEOTIDE SEQUENCE [LARGE SCALE MRNA]</scope>
    <source>
        <tissue>Testis</tissue>
    </source>
</reference>
<reference key="3">
    <citation type="journal article" date="2009" name="Proc. Natl. Acad. Sci. U.S.A.">
        <title>MEIG1 is essential for spermiogenesis in mice.</title>
        <authorList>
            <person name="Zhang Z."/>
            <person name="Shen X."/>
            <person name="Gude D.R."/>
            <person name="Wilkinson B.M."/>
            <person name="Justice M.J."/>
            <person name="Flickinger C.J."/>
            <person name="Herr J.C."/>
            <person name="Eddy E.M."/>
            <person name="Strauss J.F. III"/>
        </authorList>
    </citation>
    <scope>FUNCTION</scope>
    <scope>INTERACTION WITH PACRG</scope>
    <scope>TISSUE SPECIFICITY</scope>
    <scope>DEVELOPMENTAL STAGE</scope>
    <scope>DISRUPTION PHENOTYPE</scope>
</reference>
<reference key="4">
    <citation type="journal article" date="2010" name="Cell">
        <title>A tissue-specific atlas of mouse protein phosphorylation and expression.</title>
        <authorList>
            <person name="Huttlin E.L."/>
            <person name="Jedrychowski M.P."/>
            <person name="Elias J.E."/>
            <person name="Goswami T."/>
            <person name="Rad R."/>
            <person name="Beausoleil S.A."/>
            <person name="Villen J."/>
            <person name="Haas W."/>
            <person name="Sowa M.E."/>
            <person name="Gygi S.P."/>
        </authorList>
    </citation>
    <scope>IDENTIFICATION BY MASS SPECTROMETRY [LARGE SCALE ANALYSIS]</scope>
    <source>
        <tissue>Testis</tissue>
    </source>
</reference>
<reference key="5">
    <citation type="journal article" date="2010" name="J. Hum. Genet.">
        <title>Screening of genes involved in chromosome segregation during meiosis I: toward the identification of genes responsible for infertility in humans.</title>
        <authorList>
            <person name="Kogo H."/>
            <person name="Kowa-Sugiyama H."/>
            <person name="Yamada K."/>
            <person name="Bolor H."/>
            <person name="Tsutsumi M."/>
            <person name="Ohye T."/>
            <person name="Inagaki H."/>
            <person name="Taniguchi M."/>
            <person name="Toda T."/>
            <person name="Kurahashi H."/>
        </authorList>
    </citation>
    <scope>TISSUE SPECIFICITY</scope>
    <scope>DEVELOPMENTAL STAGE</scope>
</reference>
<reference key="6">
    <citation type="journal article" date="2022" name="Front. Cell Dev. Biol.">
        <title>TMPRSS12 Functions in Meiosis and Spermiogenesis and Is Required for Male Fertility in Mice.</title>
        <authorList>
            <person name="Zhang J."/>
            <person name="Zhou X."/>
            <person name="Wan D."/>
            <person name="Yu L."/>
            <person name="Chen X."/>
            <person name="Yan T."/>
            <person name="Wu Z."/>
            <person name="Zheng M."/>
            <person name="Zhu F."/>
            <person name="Zhu H."/>
        </authorList>
    </citation>
    <scope>TISSUE SPECIFICITY</scope>
</reference>
<reference key="7">
    <citation type="journal article" date="2015" name="Asian J. Androl.">
        <title>Characterization of membrane occupation and recognition nexus repeat containing 3, meiosis expressed gene 1 binding partner, in mouse male germ cells.</title>
        <authorList>
            <person name="Zhang L."/>
            <person name="Shang X.J."/>
            <person name="Li H.F."/>
            <person name="Shi Y.Q."/>
            <person name="Li W."/>
            <person name="Teves M.E."/>
            <person name="Wang Z.Q."/>
            <person name="Jiang G.F."/>
            <person name="Song S.Z."/>
            <person name="Zhang Z.B."/>
        </authorList>
    </citation>
    <scope>INTERACTION WITH MORN3</scope>
</reference>
<proteinExistence type="evidence at protein level"/>
<feature type="chain" id="PRO_0000096404" description="Meiosis-expressed gene 1 protein">
    <location>
        <begin position="1"/>
        <end position="88"/>
    </location>
</feature>
<feature type="strand" evidence="9">
    <location>
        <begin position="10"/>
        <end position="13"/>
    </location>
</feature>
<feature type="helix" evidence="9">
    <location>
        <begin position="19"/>
        <end position="30"/>
    </location>
</feature>
<feature type="helix" evidence="9">
    <location>
        <begin position="35"/>
        <end position="42"/>
    </location>
</feature>
<feature type="turn" evidence="9">
    <location>
        <begin position="51"/>
        <end position="53"/>
    </location>
</feature>
<feature type="strand" evidence="9">
    <location>
        <begin position="56"/>
        <end position="60"/>
    </location>
</feature>
<feature type="strand" evidence="9">
    <location>
        <begin position="66"/>
        <end position="68"/>
    </location>
</feature>
<feature type="helix" evidence="9">
    <location>
        <begin position="77"/>
        <end position="82"/>
    </location>
</feature>
<feature type="strand" evidence="9">
    <location>
        <begin position="83"/>
        <end position="87"/>
    </location>
</feature>
<organism>
    <name type="scientific">Mus musculus</name>
    <name type="common">Mouse</name>
    <dbReference type="NCBI Taxonomy" id="10090"/>
    <lineage>
        <taxon>Eukaryota</taxon>
        <taxon>Metazoa</taxon>
        <taxon>Chordata</taxon>
        <taxon>Craniata</taxon>
        <taxon>Vertebrata</taxon>
        <taxon>Euteleostomi</taxon>
        <taxon>Mammalia</taxon>
        <taxon>Eutheria</taxon>
        <taxon>Euarchontoglires</taxon>
        <taxon>Glires</taxon>
        <taxon>Rodentia</taxon>
        <taxon>Myomorpha</taxon>
        <taxon>Muroidea</taxon>
        <taxon>Muridae</taxon>
        <taxon>Murinae</taxon>
        <taxon>Mus</taxon>
        <taxon>Mus</taxon>
    </lineage>
</organism>
<keyword id="KW-0002">3D-structure</keyword>
<keyword id="KW-0221">Differentiation</keyword>
<keyword id="KW-0469">Meiosis</keyword>
<keyword id="KW-1185">Reference proteome</keyword>
<keyword id="KW-0744">Spermatogenesis</keyword>
<evidence type="ECO:0000269" key="1">
    <source>
    </source>
</evidence>
<evidence type="ECO:0000269" key="2">
    <source>
    </source>
</evidence>
<evidence type="ECO:0000269" key="3">
    <source>
    </source>
</evidence>
<evidence type="ECO:0000269" key="4">
    <source>
    </source>
</evidence>
<evidence type="ECO:0000269" key="5">
    <source>
    </source>
</evidence>
<evidence type="ECO:0000303" key="6">
    <source>
    </source>
</evidence>
<evidence type="ECO:0000305" key="7"/>
<evidence type="ECO:0000312" key="8">
    <source>
        <dbReference type="MGI" id="MGI:1202878"/>
    </source>
</evidence>
<evidence type="ECO:0007829" key="9">
    <source>
        <dbReference type="PDB" id="2N2Y"/>
    </source>
</evidence>
<comment type="function">
    <text evidence="1 2">Essential for spermiogenesis.</text>
</comment>
<comment type="subunit">
    <text evidence="2 4">Interacts with PACRG. Interacts with MORN3 (PubMed:25248657).</text>
</comment>
<comment type="interaction">
    <interactant intactId="EBI-15805257">
        <id>Q61845</id>
    </interactant>
    <interactant intactId="EBI-8572392">
        <id>Q9DAK2</id>
        <label>Pacrg</label>
    </interactant>
    <organismsDiffer>false</organismsDiffer>
    <experiments>3</experiments>
</comment>
<comment type="tissue specificity">
    <text evidence="1 2 3 5">Expressed in the testes (at protein level) (PubMed:1390336, PubMed:20339383, PubMed:35547804). Expressed in the ovary (PubMed:20339383). Several isoforms have been identified differing in their 5'-untranslated exons. These isoforms show different tissue expression (PubMed:19805151). Some are expressed in various tissues, including lung, liver, brain, testis, oviduct and oocytes (PubMed:19805151). Some are testis-specific (PubMed:19805151).</text>
</comment>
<comment type="developmental stage">
    <text evidence="2 3">Detected in the fetal ovary and testis (PubMed:20339383). Detected in the testes as early as 6 days after birth, expression increases during the first wave of spermatogenesis (PubMed:19805151).</text>
</comment>
<comment type="disruption phenotype">
    <text evidence="2">Mice are viable, but males are sterile, producing only a few sperm that are morphologically abnormal. Spermatogenesis is dramatically impaired at the stage of elongation and condensation. Spermatozoa exhibit failure of flagellar formation, disorganization of sperm axonemes and deformed heads.</text>
</comment>
<comment type="similarity">
    <text evidence="7">Belongs to the MEIG1 family.</text>
</comment>
<dbReference type="EMBL" id="X64455">
    <property type="protein sequence ID" value="CAA45786.1"/>
    <property type="molecule type" value="mRNA"/>
</dbReference>
<dbReference type="EMBL" id="BC049538">
    <property type="protein sequence ID" value="AAH49538.1"/>
    <property type="molecule type" value="mRNA"/>
</dbReference>
<dbReference type="CCDS" id="CCDS38038.1"/>
<dbReference type="PIR" id="A49012">
    <property type="entry name" value="A49012"/>
</dbReference>
<dbReference type="RefSeq" id="NP_001342134.1">
    <property type="nucleotide sequence ID" value="NM_001355205.1"/>
</dbReference>
<dbReference type="RefSeq" id="NP_001342136.1">
    <property type="nucleotide sequence ID" value="NM_001355207.1"/>
</dbReference>
<dbReference type="RefSeq" id="NP_001342137.1">
    <property type="nucleotide sequence ID" value="NM_001355208.1"/>
</dbReference>
<dbReference type="RefSeq" id="NP_001342138.1">
    <property type="nucleotide sequence ID" value="NM_001355209.1"/>
</dbReference>
<dbReference type="RefSeq" id="NP_001342139.1">
    <property type="nucleotide sequence ID" value="NM_001355210.1"/>
</dbReference>
<dbReference type="RefSeq" id="NP_032605.1">
    <property type="nucleotide sequence ID" value="NM_008579.4"/>
</dbReference>
<dbReference type="RefSeq" id="XP_006497370.1">
    <property type="nucleotide sequence ID" value="XM_006497307.3"/>
</dbReference>
<dbReference type="RefSeq" id="XP_006497371.1">
    <property type="nucleotide sequence ID" value="XM_006497308.3"/>
</dbReference>
<dbReference type="PDB" id="2N2Y">
    <property type="method" value="NMR"/>
    <property type="chains" value="A=1-88"/>
</dbReference>
<dbReference type="PDBsum" id="2N2Y"/>
<dbReference type="BMRB" id="Q61845"/>
<dbReference type="SMR" id="Q61845"/>
<dbReference type="BioGRID" id="222579">
    <property type="interactions" value="1"/>
</dbReference>
<dbReference type="DIP" id="DIP-48982N"/>
<dbReference type="FunCoup" id="Q61845">
    <property type="interactions" value="522"/>
</dbReference>
<dbReference type="IntAct" id="Q61845">
    <property type="interactions" value="1"/>
</dbReference>
<dbReference type="STRING" id="10090.ENSMUSP00000070310"/>
<dbReference type="PhosphoSitePlus" id="Q61845"/>
<dbReference type="SwissPalm" id="Q61845"/>
<dbReference type="PaxDb" id="10090-ENSMUSP00000070310"/>
<dbReference type="ProteomicsDB" id="295923"/>
<dbReference type="Antibodypedia" id="51531">
    <property type="antibodies" value="79 antibodies from 18 providers"/>
</dbReference>
<dbReference type="DNASU" id="104362"/>
<dbReference type="Ensembl" id="ENSMUST00000064685.14">
    <property type="protein sequence ID" value="ENSMUSP00000070310.8"/>
    <property type="gene ID" value="ENSMUSG00000026650.16"/>
</dbReference>
<dbReference type="Ensembl" id="ENSMUST00000115081.8">
    <property type="protein sequence ID" value="ENSMUSP00000110733.2"/>
    <property type="gene ID" value="ENSMUSG00000026650.16"/>
</dbReference>
<dbReference type="Ensembl" id="ENSMUST00000115082.10">
    <property type="protein sequence ID" value="ENSMUSP00000110734.4"/>
    <property type="gene ID" value="ENSMUSG00000026650.16"/>
</dbReference>
<dbReference type="Ensembl" id="ENSMUST00000115083.8">
    <property type="protein sequence ID" value="ENSMUSP00000110735.2"/>
    <property type="gene ID" value="ENSMUSG00000026650.16"/>
</dbReference>
<dbReference type="Ensembl" id="ENSMUST00000115084.8">
    <property type="protein sequence ID" value="ENSMUSP00000110736.2"/>
    <property type="gene ID" value="ENSMUSG00000026650.16"/>
</dbReference>
<dbReference type="GeneID" id="104362"/>
<dbReference type="KEGG" id="mmu:104362"/>
<dbReference type="UCSC" id="uc008idw.1">
    <property type="organism name" value="mouse"/>
</dbReference>
<dbReference type="AGR" id="MGI:1202878"/>
<dbReference type="CTD" id="644890"/>
<dbReference type="MGI" id="MGI:1202878">
    <property type="gene designation" value="Meig1"/>
</dbReference>
<dbReference type="VEuPathDB" id="HostDB:ENSMUSG00000026650"/>
<dbReference type="eggNOG" id="ENOG502S7BQ">
    <property type="taxonomic scope" value="Eukaryota"/>
</dbReference>
<dbReference type="GeneTree" id="ENSGT00390000013550"/>
<dbReference type="HOGENOM" id="CLU_160103_0_0_1"/>
<dbReference type="InParanoid" id="Q61845"/>
<dbReference type="OMA" id="WPHNGYV"/>
<dbReference type="OrthoDB" id="10023051at2759"/>
<dbReference type="PhylomeDB" id="Q61845"/>
<dbReference type="TreeFam" id="TF329080"/>
<dbReference type="BioGRID-ORCS" id="104362">
    <property type="hits" value="1 hit in 76 CRISPR screens"/>
</dbReference>
<dbReference type="ChiTaRS" id="Meig1">
    <property type="organism name" value="mouse"/>
</dbReference>
<dbReference type="EvolutionaryTrace" id="Q61845"/>
<dbReference type="PRO" id="PR:Q61845"/>
<dbReference type="Proteomes" id="UP000000589">
    <property type="component" value="Chromosome 2"/>
</dbReference>
<dbReference type="RNAct" id="Q61845">
    <property type="molecule type" value="protein"/>
</dbReference>
<dbReference type="Bgee" id="ENSMUSG00000026650">
    <property type="expression patterns" value="Expressed in seminiferous tubule of testis and 72 other cell types or tissues"/>
</dbReference>
<dbReference type="ExpressionAtlas" id="Q61845">
    <property type="expression patterns" value="baseline and differential"/>
</dbReference>
<dbReference type="GO" id="GO:0005829">
    <property type="term" value="C:cytosol"/>
    <property type="evidence" value="ECO:0000314"/>
    <property type="project" value="MGI"/>
</dbReference>
<dbReference type="GO" id="GO:0002177">
    <property type="term" value="C:manchette"/>
    <property type="evidence" value="ECO:0000314"/>
    <property type="project" value="MGI"/>
</dbReference>
<dbReference type="GO" id="GO:0005634">
    <property type="term" value="C:nucleus"/>
    <property type="evidence" value="ECO:0000314"/>
    <property type="project" value="MGI"/>
</dbReference>
<dbReference type="GO" id="GO:1905198">
    <property type="term" value="P:manchette assembly"/>
    <property type="evidence" value="ECO:0000315"/>
    <property type="project" value="MGI"/>
</dbReference>
<dbReference type="GO" id="GO:0051321">
    <property type="term" value="P:meiotic cell cycle"/>
    <property type="evidence" value="ECO:0007669"/>
    <property type="project" value="UniProtKB-KW"/>
</dbReference>
<dbReference type="GO" id="GO:0008104">
    <property type="term" value="P:protein localization"/>
    <property type="evidence" value="ECO:0000315"/>
    <property type="project" value="MGI"/>
</dbReference>
<dbReference type="GO" id="GO:0007288">
    <property type="term" value="P:sperm axoneme assembly"/>
    <property type="evidence" value="ECO:0000315"/>
    <property type="project" value="MGI"/>
</dbReference>
<dbReference type="GO" id="GO:0007283">
    <property type="term" value="P:spermatogenesis"/>
    <property type="evidence" value="ECO:0000315"/>
    <property type="project" value="MGI"/>
</dbReference>
<dbReference type="InterPro" id="IPR020186">
    <property type="entry name" value="Meiosis-expressed_gene_1"/>
</dbReference>
<dbReference type="PANTHER" id="PTHR17008:SF1">
    <property type="entry name" value="MEIOSIS EXPRESSED GENE 1 PROTEIN HOMOLOG"/>
    <property type="match status" value="1"/>
</dbReference>
<dbReference type="PANTHER" id="PTHR17008">
    <property type="entry name" value="MEIOSIS-EXPRESSED GENE 1 PROTEIN"/>
    <property type="match status" value="1"/>
</dbReference>
<dbReference type="Pfam" id="PF15163">
    <property type="entry name" value="Meiosis_expr"/>
    <property type="match status" value="1"/>
</dbReference>
<gene>
    <name evidence="8" type="primary">Meig1</name>
    <name evidence="8" type="synonym">Meg1</name>
    <name evidence="6" type="synonym">MLZ-278</name>
</gene>
<accession>Q61845</accession>
<protein>
    <recommendedName>
        <fullName>Meiosis-expressed gene 1 protein</fullName>
    </recommendedName>
    <alternativeName>
        <fullName>Protein expressed in male leptotene and zygotene spermatocytes 278</fullName>
        <shortName>MLZ-278</shortName>
    </alternativeName>
</protein>
<name>MEIG1_MOUSE</name>
<sequence length="88" mass="10823">MATSDVKPKSISRAKKWSEEIENLYRFQQAGYRDEIEYKQVKQVAMVDRWPETGYVKKLQRRDNTFFYYNKERECEDKEVHKVKVYVY</sequence>